<evidence type="ECO:0000255" key="1">
    <source>
        <dbReference type="HAMAP-Rule" id="MF_01371"/>
    </source>
</evidence>
<evidence type="ECO:0000305" key="2"/>
<comment type="subunit">
    <text evidence="1">Part of the 50S ribosomal subunit.</text>
</comment>
<comment type="similarity">
    <text evidence="1">Belongs to the universal ribosomal protein uL30 family.</text>
</comment>
<comment type="sequence caution" evidence="2">
    <conflict type="erroneous initiation">
        <sequence resource="EMBL-CDS" id="ABB40909"/>
    </conflict>
</comment>
<reference key="1">
    <citation type="journal article" date="2006" name="PLoS Biol.">
        <title>The genome of deep-sea vent chemolithoautotroph Thiomicrospira crunogena XCL-2.</title>
        <authorList>
            <person name="Scott K.M."/>
            <person name="Sievert S.M."/>
            <person name="Abril F.N."/>
            <person name="Ball L.A."/>
            <person name="Barrett C.J."/>
            <person name="Blake R.A."/>
            <person name="Boller A.J."/>
            <person name="Chain P.S.G."/>
            <person name="Clark J.A."/>
            <person name="Davis C.R."/>
            <person name="Detter C."/>
            <person name="Do K.F."/>
            <person name="Dobrinski K.P."/>
            <person name="Faza B.I."/>
            <person name="Fitzpatrick K.A."/>
            <person name="Freyermuth S.K."/>
            <person name="Harmer T.L."/>
            <person name="Hauser L.J."/>
            <person name="Huegler M."/>
            <person name="Kerfeld C.A."/>
            <person name="Klotz M.G."/>
            <person name="Kong W.W."/>
            <person name="Land M."/>
            <person name="Lapidus A."/>
            <person name="Larimer F.W."/>
            <person name="Longo D.L."/>
            <person name="Lucas S."/>
            <person name="Malfatti S.A."/>
            <person name="Massey S.E."/>
            <person name="Martin D.D."/>
            <person name="McCuddin Z."/>
            <person name="Meyer F."/>
            <person name="Moore J.L."/>
            <person name="Ocampo L.H. Jr."/>
            <person name="Paul J.H."/>
            <person name="Paulsen I.T."/>
            <person name="Reep D.K."/>
            <person name="Ren Q."/>
            <person name="Ross R.L."/>
            <person name="Sato P.Y."/>
            <person name="Thomas P."/>
            <person name="Tinkham L.E."/>
            <person name="Zeruth G.T."/>
        </authorList>
    </citation>
    <scope>NUCLEOTIDE SEQUENCE [LARGE SCALE GENOMIC DNA]</scope>
    <source>
        <strain>DSM 25203 / XCL-2</strain>
    </source>
</reference>
<gene>
    <name evidence="1" type="primary">rpmD</name>
    <name type="ordered locus">Tcr_0313</name>
</gene>
<dbReference type="EMBL" id="CP000109">
    <property type="protein sequence ID" value="ABB40909.1"/>
    <property type="status" value="ALT_INIT"/>
    <property type="molecule type" value="Genomic_DNA"/>
</dbReference>
<dbReference type="SMR" id="Q31IW4"/>
<dbReference type="STRING" id="317025.Tcr_0313"/>
<dbReference type="KEGG" id="tcx:Tcr_0313"/>
<dbReference type="eggNOG" id="COG1841">
    <property type="taxonomic scope" value="Bacteria"/>
</dbReference>
<dbReference type="HOGENOM" id="CLU_131047_1_4_6"/>
<dbReference type="OrthoDB" id="9812790at2"/>
<dbReference type="GO" id="GO:0022625">
    <property type="term" value="C:cytosolic large ribosomal subunit"/>
    <property type="evidence" value="ECO:0007669"/>
    <property type="project" value="TreeGrafter"/>
</dbReference>
<dbReference type="GO" id="GO:0003735">
    <property type="term" value="F:structural constituent of ribosome"/>
    <property type="evidence" value="ECO:0007669"/>
    <property type="project" value="InterPro"/>
</dbReference>
<dbReference type="GO" id="GO:0006412">
    <property type="term" value="P:translation"/>
    <property type="evidence" value="ECO:0007669"/>
    <property type="project" value="UniProtKB-UniRule"/>
</dbReference>
<dbReference type="CDD" id="cd01658">
    <property type="entry name" value="Ribosomal_L30"/>
    <property type="match status" value="1"/>
</dbReference>
<dbReference type="FunFam" id="3.30.1390.20:FF:000001">
    <property type="entry name" value="50S ribosomal protein L30"/>
    <property type="match status" value="1"/>
</dbReference>
<dbReference type="Gene3D" id="3.30.1390.20">
    <property type="entry name" value="Ribosomal protein L30, ferredoxin-like fold domain"/>
    <property type="match status" value="1"/>
</dbReference>
<dbReference type="HAMAP" id="MF_01371_B">
    <property type="entry name" value="Ribosomal_uL30_B"/>
    <property type="match status" value="1"/>
</dbReference>
<dbReference type="InterPro" id="IPR036919">
    <property type="entry name" value="Ribo_uL30_ferredoxin-like_sf"/>
</dbReference>
<dbReference type="InterPro" id="IPR005996">
    <property type="entry name" value="Ribosomal_uL30_bac-type"/>
</dbReference>
<dbReference type="InterPro" id="IPR016082">
    <property type="entry name" value="Ribosomal_uL30_ferredoxin-like"/>
</dbReference>
<dbReference type="NCBIfam" id="TIGR01308">
    <property type="entry name" value="rpmD_bact"/>
    <property type="match status" value="1"/>
</dbReference>
<dbReference type="PANTHER" id="PTHR15892:SF2">
    <property type="entry name" value="LARGE RIBOSOMAL SUBUNIT PROTEIN UL30M"/>
    <property type="match status" value="1"/>
</dbReference>
<dbReference type="PANTHER" id="PTHR15892">
    <property type="entry name" value="MITOCHONDRIAL RIBOSOMAL PROTEIN L30"/>
    <property type="match status" value="1"/>
</dbReference>
<dbReference type="Pfam" id="PF00327">
    <property type="entry name" value="Ribosomal_L30"/>
    <property type="match status" value="1"/>
</dbReference>
<dbReference type="PIRSF" id="PIRSF002211">
    <property type="entry name" value="Ribosomal_L30_bac-type"/>
    <property type="match status" value="1"/>
</dbReference>
<dbReference type="SUPFAM" id="SSF55129">
    <property type="entry name" value="Ribosomal protein L30p/L7e"/>
    <property type="match status" value="1"/>
</dbReference>
<sequence>MSDKKLVNVTLVKSTIGRLPAHKACVAGLGLRKMHQTVAVIDTPENRGMINKVSYLLKVEEA</sequence>
<name>RL30_HYDCU</name>
<keyword id="KW-0687">Ribonucleoprotein</keyword>
<keyword id="KW-0689">Ribosomal protein</keyword>
<protein>
    <recommendedName>
        <fullName evidence="1">Large ribosomal subunit protein uL30</fullName>
    </recommendedName>
    <alternativeName>
        <fullName evidence="2">50S ribosomal protein L30</fullName>
    </alternativeName>
</protein>
<feature type="chain" id="PRO_0000273883" description="Large ribosomal subunit protein uL30">
    <location>
        <begin position="1"/>
        <end position="62"/>
    </location>
</feature>
<proteinExistence type="inferred from homology"/>
<accession>Q31IW4</accession>
<organism>
    <name type="scientific">Hydrogenovibrio crunogenus (strain DSM 25203 / XCL-2)</name>
    <name type="common">Thiomicrospira crunogena</name>
    <dbReference type="NCBI Taxonomy" id="317025"/>
    <lineage>
        <taxon>Bacteria</taxon>
        <taxon>Pseudomonadati</taxon>
        <taxon>Pseudomonadota</taxon>
        <taxon>Gammaproteobacteria</taxon>
        <taxon>Thiotrichales</taxon>
        <taxon>Piscirickettsiaceae</taxon>
        <taxon>Hydrogenovibrio</taxon>
    </lineage>
</organism>